<accession>P81315</accession>
<proteinExistence type="inferred from homology"/>
<protein>
    <recommendedName>
        <fullName>Putative transposase MJ0856.1</fullName>
    </recommendedName>
</protein>
<keyword id="KW-0233">DNA recombination</keyword>
<keyword id="KW-0238">DNA-binding</keyword>
<keyword id="KW-0479">Metal-binding</keyword>
<keyword id="KW-1185">Reference proteome</keyword>
<keyword id="KW-0814">Transposable element</keyword>
<keyword id="KW-0815">Transposition</keyword>
<keyword id="KW-0862">Zinc</keyword>
<organism>
    <name type="scientific">Methanocaldococcus jannaschii (strain ATCC 43067 / DSM 2661 / JAL-1 / JCM 10045 / NBRC 100440)</name>
    <name type="common">Methanococcus jannaschii</name>
    <dbReference type="NCBI Taxonomy" id="243232"/>
    <lineage>
        <taxon>Archaea</taxon>
        <taxon>Methanobacteriati</taxon>
        <taxon>Methanobacteriota</taxon>
        <taxon>Methanomada group</taxon>
        <taxon>Methanococci</taxon>
        <taxon>Methanococcales</taxon>
        <taxon>Methanocaldococcaceae</taxon>
        <taxon>Methanocaldococcus</taxon>
    </lineage>
</organism>
<name>Y85A_METJA</name>
<dbReference type="EMBL" id="L77117">
    <property type="protein sequence ID" value="AAB98861.1"/>
    <property type="molecule type" value="Genomic_DNA"/>
</dbReference>
<dbReference type="SMR" id="P81315"/>
<dbReference type="STRING" id="243232.MJ_0856.1"/>
<dbReference type="PaxDb" id="243232-MJ_0856.1"/>
<dbReference type="EnsemblBacteria" id="AAB98861">
    <property type="protein sequence ID" value="AAB98861"/>
    <property type="gene ID" value="MJ_0856.1"/>
</dbReference>
<dbReference type="KEGG" id="mja:MJ_0856.1"/>
<dbReference type="eggNOG" id="arCOG00679">
    <property type="taxonomic scope" value="Archaea"/>
</dbReference>
<dbReference type="HOGENOM" id="CLU_2177889_0_0_2"/>
<dbReference type="InParanoid" id="P81315"/>
<dbReference type="PhylomeDB" id="P81315"/>
<dbReference type="Proteomes" id="UP000000805">
    <property type="component" value="Chromosome"/>
</dbReference>
<dbReference type="GO" id="GO:0003677">
    <property type="term" value="F:DNA binding"/>
    <property type="evidence" value="ECO:0007669"/>
    <property type="project" value="UniProtKB-KW"/>
</dbReference>
<dbReference type="GO" id="GO:0046872">
    <property type="term" value="F:metal ion binding"/>
    <property type="evidence" value="ECO:0007669"/>
    <property type="project" value="UniProtKB-KW"/>
</dbReference>
<dbReference type="GO" id="GO:0006310">
    <property type="term" value="P:DNA recombination"/>
    <property type="evidence" value="ECO:0007669"/>
    <property type="project" value="UniProtKB-KW"/>
</dbReference>
<dbReference type="GO" id="GO:0032196">
    <property type="term" value="P:transposition"/>
    <property type="evidence" value="ECO:0007669"/>
    <property type="project" value="UniProtKB-KW"/>
</dbReference>
<dbReference type="InterPro" id="IPR010095">
    <property type="entry name" value="Cas12f1-like_TNB"/>
</dbReference>
<dbReference type="Pfam" id="PF07282">
    <property type="entry name" value="Cas12f1-like_TNB"/>
    <property type="match status" value="1"/>
</dbReference>
<gene>
    <name type="ordered locus">MJ0856.1</name>
</gene>
<reference key="1">
    <citation type="journal article" date="1996" name="Science">
        <title>Complete genome sequence of the methanogenic archaeon, Methanococcus jannaschii.</title>
        <authorList>
            <person name="Bult C.J."/>
            <person name="White O."/>
            <person name="Olsen G.J."/>
            <person name="Zhou L."/>
            <person name="Fleischmann R.D."/>
            <person name="Sutton G.G."/>
            <person name="Blake J.A."/>
            <person name="FitzGerald L.M."/>
            <person name="Clayton R.A."/>
            <person name="Gocayne J.D."/>
            <person name="Kerlavage A.R."/>
            <person name="Dougherty B.A."/>
            <person name="Tomb J.-F."/>
            <person name="Adams M.D."/>
            <person name="Reich C.I."/>
            <person name="Overbeek R."/>
            <person name="Kirkness E.F."/>
            <person name="Weinstock K.G."/>
            <person name="Merrick J.M."/>
            <person name="Glodek A."/>
            <person name="Scott J.L."/>
            <person name="Geoghagen N.S.M."/>
            <person name="Weidman J.F."/>
            <person name="Fuhrmann J.L."/>
            <person name="Nguyen D."/>
            <person name="Utterback T.R."/>
            <person name="Kelley J.M."/>
            <person name="Peterson J.D."/>
            <person name="Sadow P.W."/>
            <person name="Hanna M.C."/>
            <person name="Cotton M.D."/>
            <person name="Roberts K.M."/>
            <person name="Hurst M.A."/>
            <person name="Kaine B.P."/>
            <person name="Borodovsky M."/>
            <person name="Klenk H.-P."/>
            <person name="Fraser C.M."/>
            <person name="Smith H.O."/>
            <person name="Woese C.R."/>
            <person name="Venter J.C."/>
        </authorList>
    </citation>
    <scope>NUCLEOTIDE SEQUENCE [LARGE SCALE GENOMIC DNA]</scope>
    <source>
        <strain>ATCC 43067 / DSM 2661 / JAL-1 / JCM 10045 / NBRC 100440</strain>
    </source>
</reference>
<feature type="chain" id="PRO_0000107081" description="Putative transposase MJ0856.1">
    <location>
        <begin position="1"/>
        <end position="109"/>
    </location>
</feature>
<feature type="binding site" evidence="1">
    <location>
        <position position="36"/>
    </location>
    <ligand>
        <name>Zn(2+)</name>
        <dbReference type="ChEBI" id="CHEBI:29105"/>
    </ligand>
</feature>
<feature type="binding site" evidence="1">
    <location>
        <position position="39"/>
    </location>
    <ligand>
        <name>Zn(2+)</name>
        <dbReference type="ChEBI" id="CHEBI:29105"/>
    </ligand>
</feature>
<feature type="binding site" evidence="1">
    <location>
        <position position="62"/>
    </location>
    <ligand>
        <name>Zn(2+)</name>
        <dbReference type="ChEBI" id="CHEBI:29105"/>
    </ligand>
</feature>
<feature type="binding site" evidence="1">
    <location>
        <position position="65"/>
    </location>
    <ligand>
        <name>Zn(2+)</name>
        <dbReference type="ChEBI" id="CHEBI:29105"/>
    </ligand>
</feature>
<sequence length="109" mass="12230">MHNISAKKFLGYLKNKCLEFGVKVIEGNPAYTSIKCPNCGSRLSQLYKLADERALPSRLMYCFDCGFYADRDTVAVFNLIKRFTGLYPFSPKSNEPIAEGTVFPDEAMG</sequence>
<comment type="similarity">
    <text evidence="2">Belongs to the transposase 35 family.</text>
</comment>
<evidence type="ECO:0000255" key="1"/>
<evidence type="ECO:0000305" key="2"/>